<name>ECPB_ECOK1</name>
<proteinExistence type="inferred from homology"/>
<accession>A1A7X5</accession>
<organism>
    <name type="scientific">Escherichia coli O1:K1 / APEC</name>
    <dbReference type="NCBI Taxonomy" id="405955"/>
    <lineage>
        <taxon>Bacteria</taxon>
        <taxon>Pseudomonadati</taxon>
        <taxon>Pseudomonadota</taxon>
        <taxon>Gammaproteobacteria</taxon>
        <taxon>Enterobacterales</taxon>
        <taxon>Enterobacteriaceae</taxon>
        <taxon>Escherichia</taxon>
    </lineage>
</organism>
<dbReference type="EMBL" id="CP000468">
    <property type="protein sequence ID" value="ABI99764.1"/>
    <property type="status" value="ALT_INIT"/>
    <property type="molecule type" value="Genomic_DNA"/>
</dbReference>
<dbReference type="RefSeq" id="WP_000716404.1">
    <property type="nucleotide sequence ID" value="NZ_CADILS010000092.1"/>
</dbReference>
<dbReference type="SMR" id="A1A7X5"/>
<dbReference type="KEGG" id="ecv:APECO1_1705"/>
<dbReference type="HOGENOM" id="CLU_106652_0_0_6"/>
<dbReference type="Proteomes" id="UP000008216">
    <property type="component" value="Chromosome"/>
</dbReference>
<dbReference type="Gene3D" id="2.60.40.10">
    <property type="entry name" value="Immunoglobulins"/>
    <property type="match status" value="1"/>
</dbReference>
<dbReference type="InterPro" id="IPR040695">
    <property type="entry name" value="EcpB_C"/>
</dbReference>
<dbReference type="InterPro" id="IPR013783">
    <property type="entry name" value="Ig-like_fold"/>
</dbReference>
<dbReference type="InterPro" id="IPR008962">
    <property type="entry name" value="PapD-like_sf"/>
</dbReference>
<dbReference type="Pfam" id="PF18649">
    <property type="entry name" value="EcpB_C"/>
    <property type="match status" value="1"/>
</dbReference>
<dbReference type="SUPFAM" id="SSF49354">
    <property type="entry name" value="PapD-like"/>
    <property type="match status" value="1"/>
</dbReference>
<gene>
    <name type="primary">ecpB</name>
    <name type="synonym">matC</name>
    <name type="ordered locus">Ecok1_02710</name>
    <name type="ORF">APECO1_1705</name>
</gene>
<feature type="signal peptide" evidence="2">
    <location>
        <begin position="1"/>
        <end position="20"/>
    </location>
</feature>
<feature type="chain" id="PRO_0000369163" description="Probable fimbrial chaperone EcpB">
    <location>
        <begin position="21"/>
        <end position="222"/>
    </location>
</feature>
<protein>
    <recommendedName>
        <fullName>Probable fimbrial chaperone EcpB</fullName>
    </recommendedName>
</protein>
<keyword id="KW-0143">Chaperone</keyword>
<keyword id="KW-1029">Fimbrium biogenesis</keyword>
<keyword id="KW-1185">Reference proteome</keyword>
<keyword id="KW-0732">Signal</keyword>
<comment type="function">
    <text evidence="1">Part of the ecpRABCDE operon, which encodes the E.coli common pilus (ECP). ECP is found in both commensal and pathogenic strains and plays a dual role in early-stage biofilm development and host cell recognition (By similarity).</text>
</comment>
<comment type="induction">
    <text evidence="1">Negatively regulated by H-NS. Positively regulated by IHF and EcpR (By similarity).</text>
</comment>
<comment type="similarity">
    <text evidence="3">Belongs to the EcpB/EcpE family.</text>
</comment>
<comment type="sequence caution" evidence="3">
    <conflict type="erroneous initiation">
        <sequence resource="EMBL-CDS" id="ABI99764"/>
    </conflict>
</comment>
<reference key="1">
    <citation type="journal article" date="2007" name="J. Bacteriol.">
        <title>The genome sequence of avian pathogenic Escherichia coli strain O1:K1:H7 shares strong similarities with human extraintestinal pathogenic E. coli genomes.</title>
        <authorList>
            <person name="Johnson T.J."/>
            <person name="Kariyawasam S."/>
            <person name="Wannemuehler Y."/>
            <person name="Mangiamele P."/>
            <person name="Johnson S.J."/>
            <person name="Doetkott C."/>
            <person name="Skyberg J.A."/>
            <person name="Lynne A.M."/>
            <person name="Johnson J.R."/>
            <person name="Nolan L.K."/>
        </authorList>
    </citation>
    <scope>NUCLEOTIDE SEQUENCE [LARGE SCALE GENOMIC DNA]</scope>
</reference>
<sequence length="222" mass="24501">MKKHLLPLALLFSGISPAQALDVGDISSFMNSDSSTLSKTIQNSTDSGRLINIRLERLSSPLDDGQVIAMDKPDELLLTPASLLLPAQASEVIRFFYKGPADEKERYYRIVWFDQALSDAQRDNANRSAVATASARIGTILVVAPRQANYHFQYANGSLTNTGNATLRILAYGPCLKAANGKECKENYYLMPGKSRRFTRVDTADNKGRVALWQGDKFIPVK</sequence>
<evidence type="ECO:0000250" key="1"/>
<evidence type="ECO:0000255" key="2"/>
<evidence type="ECO:0000305" key="3"/>